<feature type="chain" id="PRO_0000142018" description="1-(5-phosphoribosyl)-5-[(5-phosphoribosylamino)methylideneamino] imidazole-4-carboxamide isomerase">
    <location>
        <begin position="1"/>
        <end position="241"/>
    </location>
</feature>
<feature type="active site" description="Proton acceptor" evidence="1">
    <location>
        <position position="8"/>
    </location>
</feature>
<feature type="active site" description="Proton donor" evidence="1">
    <location>
        <position position="130"/>
    </location>
</feature>
<keyword id="KW-0028">Amino-acid biosynthesis</keyword>
<keyword id="KW-0963">Cytoplasm</keyword>
<keyword id="KW-0368">Histidine biosynthesis</keyword>
<keyword id="KW-0413">Isomerase</keyword>
<sequence length="241" mass="26492">MIVIPAIDLFDNCAVRLFKGNYEEKKIYSSEPWKLAESFAKNGATLLHLVDLNGARNQLGVNEDSILKIRETTSLKVQLGGGIRDKEKLAYYDKIGINRFILGTAAVTNPDLLKYALDNYGKERVVVAVDARDGIVKIAGWEKDSGIHYRDLLERLVKAGIEHIVFTDIAQDGTLAGPNLEAYREILNSYPFQVIASGGIASLKDLMDLSSLKTKISLYGVITGKALYEGKLDLAKAISSI</sequence>
<evidence type="ECO:0000255" key="1">
    <source>
        <dbReference type="HAMAP-Rule" id="MF_01014"/>
    </source>
</evidence>
<name>HIS4_LEPIC</name>
<comment type="catalytic activity">
    <reaction evidence="1">
        <text>1-(5-phospho-beta-D-ribosyl)-5-[(5-phospho-beta-D-ribosylamino)methylideneamino]imidazole-4-carboxamide = 5-[(5-phospho-1-deoxy-D-ribulos-1-ylimino)methylamino]-1-(5-phospho-beta-D-ribosyl)imidazole-4-carboxamide</text>
        <dbReference type="Rhea" id="RHEA:15469"/>
        <dbReference type="ChEBI" id="CHEBI:58435"/>
        <dbReference type="ChEBI" id="CHEBI:58525"/>
        <dbReference type="EC" id="5.3.1.16"/>
    </reaction>
</comment>
<comment type="pathway">
    <text evidence="1">Amino-acid biosynthesis; L-histidine biosynthesis; L-histidine from 5-phospho-alpha-D-ribose 1-diphosphate: step 4/9.</text>
</comment>
<comment type="subcellular location">
    <subcellularLocation>
        <location evidence="1">Cytoplasm</location>
    </subcellularLocation>
</comment>
<comment type="similarity">
    <text evidence="1">Belongs to the HisA/HisF family.</text>
</comment>
<dbReference type="EC" id="5.3.1.16" evidence="1"/>
<dbReference type="EMBL" id="AE016823">
    <property type="protein sequence ID" value="AAS68747.1"/>
    <property type="molecule type" value="Genomic_DNA"/>
</dbReference>
<dbReference type="RefSeq" id="WP_000635440.1">
    <property type="nucleotide sequence ID" value="NC_005823.1"/>
</dbReference>
<dbReference type="SMR" id="P62354"/>
<dbReference type="GeneID" id="61143469"/>
<dbReference type="KEGG" id="lic:LIC_10114"/>
<dbReference type="HOGENOM" id="CLU_048577_1_2_12"/>
<dbReference type="UniPathway" id="UPA00031">
    <property type="reaction ID" value="UER00009"/>
</dbReference>
<dbReference type="Proteomes" id="UP000007037">
    <property type="component" value="Chromosome I"/>
</dbReference>
<dbReference type="GO" id="GO:0005737">
    <property type="term" value="C:cytoplasm"/>
    <property type="evidence" value="ECO:0007669"/>
    <property type="project" value="UniProtKB-SubCell"/>
</dbReference>
<dbReference type="GO" id="GO:0003949">
    <property type="term" value="F:1-(5-phosphoribosyl)-5-[(5-phosphoribosylamino)methylideneamino]imidazole-4-carboxamide isomerase activity"/>
    <property type="evidence" value="ECO:0007669"/>
    <property type="project" value="UniProtKB-UniRule"/>
</dbReference>
<dbReference type="GO" id="GO:0000105">
    <property type="term" value="P:L-histidine biosynthetic process"/>
    <property type="evidence" value="ECO:0007669"/>
    <property type="project" value="UniProtKB-UniRule"/>
</dbReference>
<dbReference type="GO" id="GO:0000162">
    <property type="term" value="P:L-tryptophan biosynthetic process"/>
    <property type="evidence" value="ECO:0007669"/>
    <property type="project" value="TreeGrafter"/>
</dbReference>
<dbReference type="CDD" id="cd04732">
    <property type="entry name" value="HisA"/>
    <property type="match status" value="1"/>
</dbReference>
<dbReference type="FunFam" id="3.20.20.70:FF:000009">
    <property type="entry name" value="1-(5-phosphoribosyl)-5-[(5-phosphoribosylamino)methylideneamino] imidazole-4-carboxamide isomerase"/>
    <property type="match status" value="1"/>
</dbReference>
<dbReference type="Gene3D" id="3.20.20.70">
    <property type="entry name" value="Aldolase class I"/>
    <property type="match status" value="1"/>
</dbReference>
<dbReference type="HAMAP" id="MF_01014">
    <property type="entry name" value="HisA"/>
    <property type="match status" value="1"/>
</dbReference>
<dbReference type="InterPro" id="IPR013785">
    <property type="entry name" value="Aldolase_TIM"/>
</dbReference>
<dbReference type="InterPro" id="IPR006062">
    <property type="entry name" value="His_biosynth"/>
</dbReference>
<dbReference type="InterPro" id="IPR006063">
    <property type="entry name" value="HisA_bact_arch"/>
</dbReference>
<dbReference type="InterPro" id="IPR044524">
    <property type="entry name" value="Isoase_HisA-like"/>
</dbReference>
<dbReference type="InterPro" id="IPR023016">
    <property type="entry name" value="Isoase_HisA-like_bact"/>
</dbReference>
<dbReference type="InterPro" id="IPR011060">
    <property type="entry name" value="RibuloseP-bd_barrel"/>
</dbReference>
<dbReference type="NCBIfam" id="TIGR00007">
    <property type="entry name" value="1-(5-phosphoribosyl)-5-[(5-phosphoribosylamino)methylideneamino]imidazole-4-carboxamide isomerase"/>
    <property type="match status" value="1"/>
</dbReference>
<dbReference type="PANTHER" id="PTHR43090">
    <property type="entry name" value="1-(5-PHOSPHORIBOSYL)-5-[(5-PHOSPHORIBOSYLAMINO)METHYLIDENEAMINO] IMIDAZOLE-4-CARBOXAMIDE ISOMERASE"/>
    <property type="match status" value="1"/>
</dbReference>
<dbReference type="PANTHER" id="PTHR43090:SF2">
    <property type="entry name" value="1-(5-PHOSPHORIBOSYL)-5-[(5-PHOSPHORIBOSYLAMINO)METHYLIDENEAMINO] IMIDAZOLE-4-CARBOXAMIDE ISOMERASE"/>
    <property type="match status" value="1"/>
</dbReference>
<dbReference type="Pfam" id="PF00977">
    <property type="entry name" value="His_biosynth"/>
    <property type="match status" value="1"/>
</dbReference>
<dbReference type="SUPFAM" id="SSF51366">
    <property type="entry name" value="Ribulose-phoshate binding barrel"/>
    <property type="match status" value="1"/>
</dbReference>
<protein>
    <recommendedName>
        <fullName evidence="1">1-(5-phosphoribosyl)-5-[(5-phosphoribosylamino)methylideneamino] imidazole-4-carboxamide isomerase</fullName>
        <ecNumber evidence="1">5.3.1.16</ecNumber>
    </recommendedName>
    <alternativeName>
        <fullName evidence="1">Phosphoribosylformimino-5-aminoimidazole carboxamide ribotide isomerase</fullName>
    </alternativeName>
</protein>
<organism>
    <name type="scientific">Leptospira interrogans serogroup Icterohaemorrhagiae serovar copenhageni (strain Fiocruz L1-130)</name>
    <dbReference type="NCBI Taxonomy" id="267671"/>
    <lineage>
        <taxon>Bacteria</taxon>
        <taxon>Pseudomonadati</taxon>
        <taxon>Spirochaetota</taxon>
        <taxon>Spirochaetia</taxon>
        <taxon>Leptospirales</taxon>
        <taxon>Leptospiraceae</taxon>
        <taxon>Leptospira</taxon>
    </lineage>
</organism>
<gene>
    <name evidence="1" type="primary">hisA</name>
    <name type="ordered locus">LIC_10114</name>
</gene>
<proteinExistence type="inferred from homology"/>
<reference key="1">
    <citation type="journal article" date="2004" name="J. Bacteriol.">
        <title>Comparative genomics of two Leptospira interrogans serovars reveals novel insights into physiology and pathogenesis.</title>
        <authorList>
            <person name="Nascimento A.L.T.O."/>
            <person name="Ko A.I."/>
            <person name="Martins E.A.L."/>
            <person name="Monteiro-Vitorello C.B."/>
            <person name="Ho P.L."/>
            <person name="Haake D.A."/>
            <person name="Verjovski-Almeida S."/>
            <person name="Hartskeerl R.A."/>
            <person name="Marques M.V."/>
            <person name="Oliveira M.C."/>
            <person name="Menck C.F.M."/>
            <person name="Leite L.C.C."/>
            <person name="Carrer H."/>
            <person name="Coutinho L.L."/>
            <person name="Degrave W.M."/>
            <person name="Dellagostin O.A."/>
            <person name="El-Dorry H."/>
            <person name="Ferro E.S."/>
            <person name="Ferro M.I.T."/>
            <person name="Furlan L.R."/>
            <person name="Gamberini M."/>
            <person name="Giglioti E.A."/>
            <person name="Goes-Neto A."/>
            <person name="Goldman G.H."/>
            <person name="Goldman M.H.S."/>
            <person name="Harakava R."/>
            <person name="Jeronimo S.M.B."/>
            <person name="Junqueira-de-Azevedo I.L.M."/>
            <person name="Kimura E.T."/>
            <person name="Kuramae E.E."/>
            <person name="Lemos E.G.M."/>
            <person name="Lemos M.V.F."/>
            <person name="Marino C.L."/>
            <person name="Nunes L.R."/>
            <person name="de Oliveira R.C."/>
            <person name="Pereira G.G."/>
            <person name="Reis M.S."/>
            <person name="Schriefer A."/>
            <person name="Siqueira W.J."/>
            <person name="Sommer P."/>
            <person name="Tsai S.M."/>
            <person name="Simpson A.J.G."/>
            <person name="Ferro J.A."/>
            <person name="Camargo L.E.A."/>
            <person name="Kitajima J.P."/>
            <person name="Setubal J.C."/>
            <person name="Van Sluys M.A."/>
        </authorList>
    </citation>
    <scope>NUCLEOTIDE SEQUENCE [LARGE SCALE GENOMIC DNA]</scope>
    <source>
        <strain>Fiocruz L1-130</strain>
    </source>
</reference>
<accession>P62354</accession>